<reference key="1">
    <citation type="journal article" date="2005" name="Nat. Biotechnol.">
        <title>Complete genome sequence of the plant commensal Pseudomonas fluorescens Pf-5.</title>
        <authorList>
            <person name="Paulsen I.T."/>
            <person name="Press C.M."/>
            <person name="Ravel J."/>
            <person name="Kobayashi D.Y."/>
            <person name="Myers G.S.A."/>
            <person name="Mavrodi D.V."/>
            <person name="DeBoy R.T."/>
            <person name="Seshadri R."/>
            <person name="Ren Q."/>
            <person name="Madupu R."/>
            <person name="Dodson R.J."/>
            <person name="Durkin A.S."/>
            <person name="Brinkac L.M."/>
            <person name="Daugherty S.C."/>
            <person name="Sullivan S.A."/>
            <person name="Rosovitz M.J."/>
            <person name="Gwinn M.L."/>
            <person name="Zhou L."/>
            <person name="Schneider D.J."/>
            <person name="Cartinhour S.W."/>
            <person name="Nelson W.C."/>
            <person name="Weidman J."/>
            <person name="Watkins K."/>
            <person name="Tran K."/>
            <person name="Khouri H."/>
            <person name="Pierson E.A."/>
            <person name="Pierson L.S. III"/>
            <person name="Thomashow L.S."/>
            <person name="Loper J.E."/>
        </authorList>
    </citation>
    <scope>NUCLEOTIDE SEQUENCE [LARGE SCALE GENOMIC DNA]</scope>
    <source>
        <strain>ATCC BAA-477 / NRRL B-23932 / Pf-5</strain>
    </source>
</reference>
<accession>Q4KJR8</accession>
<dbReference type="EC" id="5.4.2.12" evidence="1"/>
<dbReference type="EMBL" id="CP000076">
    <property type="protein sequence ID" value="AAY95780.1"/>
    <property type="molecule type" value="Genomic_DNA"/>
</dbReference>
<dbReference type="RefSeq" id="WP_011058746.1">
    <property type="nucleotide sequence ID" value="NC_004129.6"/>
</dbReference>
<dbReference type="SMR" id="Q4KJR8"/>
<dbReference type="STRING" id="220664.PFL_0371"/>
<dbReference type="KEGG" id="pfl:PFL_0371"/>
<dbReference type="PATRIC" id="fig|220664.5.peg.379"/>
<dbReference type="eggNOG" id="COG0696">
    <property type="taxonomic scope" value="Bacteria"/>
</dbReference>
<dbReference type="HOGENOM" id="CLU_026099_2_0_6"/>
<dbReference type="UniPathway" id="UPA00109">
    <property type="reaction ID" value="UER00186"/>
</dbReference>
<dbReference type="Proteomes" id="UP000008540">
    <property type="component" value="Chromosome"/>
</dbReference>
<dbReference type="GO" id="GO:0005829">
    <property type="term" value="C:cytosol"/>
    <property type="evidence" value="ECO:0007669"/>
    <property type="project" value="TreeGrafter"/>
</dbReference>
<dbReference type="GO" id="GO:0030145">
    <property type="term" value="F:manganese ion binding"/>
    <property type="evidence" value="ECO:0007669"/>
    <property type="project" value="UniProtKB-UniRule"/>
</dbReference>
<dbReference type="GO" id="GO:0004619">
    <property type="term" value="F:phosphoglycerate mutase activity"/>
    <property type="evidence" value="ECO:0007669"/>
    <property type="project" value="UniProtKB-EC"/>
</dbReference>
<dbReference type="GO" id="GO:0006007">
    <property type="term" value="P:glucose catabolic process"/>
    <property type="evidence" value="ECO:0007669"/>
    <property type="project" value="InterPro"/>
</dbReference>
<dbReference type="GO" id="GO:0006096">
    <property type="term" value="P:glycolytic process"/>
    <property type="evidence" value="ECO:0007669"/>
    <property type="project" value="UniProtKB-UniRule"/>
</dbReference>
<dbReference type="CDD" id="cd16010">
    <property type="entry name" value="iPGM"/>
    <property type="match status" value="1"/>
</dbReference>
<dbReference type="FunFam" id="3.40.1450.10:FF:000001">
    <property type="entry name" value="2,3-bisphosphoglycerate-independent phosphoglycerate mutase"/>
    <property type="match status" value="1"/>
</dbReference>
<dbReference type="FunFam" id="3.40.720.10:FF:000001">
    <property type="entry name" value="2,3-bisphosphoglycerate-independent phosphoglycerate mutase"/>
    <property type="match status" value="1"/>
</dbReference>
<dbReference type="Gene3D" id="3.40.720.10">
    <property type="entry name" value="Alkaline Phosphatase, subunit A"/>
    <property type="match status" value="1"/>
</dbReference>
<dbReference type="Gene3D" id="3.40.1450.10">
    <property type="entry name" value="BPG-independent phosphoglycerate mutase, domain B"/>
    <property type="match status" value="1"/>
</dbReference>
<dbReference type="HAMAP" id="MF_01038">
    <property type="entry name" value="GpmI"/>
    <property type="match status" value="1"/>
</dbReference>
<dbReference type="InterPro" id="IPR017850">
    <property type="entry name" value="Alkaline_phosphatase_core_sf"/>
</dbReference>
<dbReference type="InterPro" id="IPR011258">
    <property type="entry name" value="BPG-indep_PGM_N"/>
</dbReference>
<dbReference type="InterPro" id="IPR006124">
    <property type="entry name" value="Metalloenzyme"/>
</dbReference>
<dbReference type="InterPro" id="IPR036646">
    <property type="entry name" value="PGAM_B_sf"/>
</dbReference>
<dbReference type="InterPro" id="IPR005995">
    <property type="entry name" value="Pgm_bpd_ind"/>
</dbReference>
<dbReference type="NCBIfam" id="TIGR01307">
    <property type="entry name" value="pgm_bpd_ind"/>
    <property type="match status" value="1"/>
</dbReference>
<dbReference type="PANTHER" id="PTHR31637">
    <property type="entry name" value="2,3-BISPHOSPHOGLYCERATE-INDEPENDENT PHOSPHOGLYCERATE MUTASE"/>
    <property type="match status" value="1"/>
</dbReference>
<dbReference type="PANTHER" id="PTHR31637:SF0">
    <property type="entry name" value="2,3-BISPHOSPHOGLYCERATE-INDEPENDENT PHOSPHOGLYCERATE MUTASE"/>
    <property type="match status" value="1"/>
</dbReference>
<dbReference type="Pfam" id="PF06415">
    <property type="entry name" value="iPGM_N"/>
    <property type="match status" value="1"/>
</dbReference>
<dbReference type="Pfam" id="PF01676">
    <property type="entry name" value="Metalloenzyme"/>
    <property type="match status" value="1"/>
</dbReference>
<dbReference type="PIRSF" id="PIRSF001492">
    <property type="entry name" value="IPGAM"/>
    <property type="match status" value="1"/>
</dbReference>
<dbReference type="SUPFAM" id="SSF64158">
    <property type="entry name" value="2,3-Bisphosphoglycerate-independent phosphoglycerate mutase, substrate-binding domain"/>
    <property type="match status" value="1"/>
</dbReference>
<dbReference type="SUPFAM" id="SSF53649">
    <property type="entry name" value="Alkaline phosphatase-like"/>
    <property type="match status" value="1"/>
</dbReference>
<evidence type="ECO:0000255" key="1">
    <source>
        <dbReference type="HAMAP-Rule" id="MF_01038"/>
    </source>
</evidence>
<comment type="function">
    <text evidence="1">Catalyzes the interconversion of 2-phosphoglycerate and 3-phosphoglycerate.</text>
</comment>
<comment type="catalytic activity">
    <reaction evidence="1">
        <text>(2R)-2-phosphoglycerate = (2R)-3-phosphoglycerate</text>
        <dbReference type="Rhea" id="RHEA:15901"/>
        <dbReference type="ChEBI" id="CHEBI:58272"/>
        <dbReference type="ChEBI" id="CHEBI:58289"/>
        <dbReference type="EC" id="5.4.2.12"/>
    </reaction>
</comment>
<comment type="cofactor">
    <cofactor evidence="1">
        <name>Mn(2+)</name>
        <dbReference type="ChEBI" id="CHEBI:29035"/>
    </cofactor>
    <text evidence="1">Binds 2 manganese ions per subunit.</text>
</comment>
<comment type="pathway">
    <text evidence="1">Carbohydrate degradation; glycolysis; pyruvate from D-glyceraldehyde 3-phosphate: step 3/5.</text>
</comment>
<comment type="subunit">
    <text evidence="1">Monomer.</text>
</comment>
<comment type="similarity">
    <text evidence="1">Belongs to the BPG-independent phosphoglycerate mutase family.</text>
</comment>
<name>GPMI_PSEF5</name>
<feature type="chain" id="PRO_0000212189" description="2,3-bisphosphoglycerate-independent phosphoglycerate mutase">
    <location>
        <begin position="1"/>
        <end position="513"/>
    </location>
</feature>
<feature type="active site" description="Phosphoserine intermediate" evidence="1">
    <location>
        <position position="64"/>
    </location>
</feature>
<feature type="binding site" evidence="1">
    <location>
        <position position="14"/>
    </location>
    <ligand>
        <name>Mn(2+)</name>
        <dbReference type="ChEBI" id="CHEBI:29035"/>
        <label>2</label>
    </ligand>
</feature>
<feature type="binding site" evidence="1">
    <location>
        <position position="64"/>
    </location>
    <ligand>
        <name>Mn(2+)</name>
        <dbReference type="ChEBI" id="CHEBI:29035"/>
        <label>2</label>
    </ligand>
</feature>
<feature type="binding site" evidence="1">
    <location>
        <position position="125"/>
    </location>
    <ligand>
        <name>substrate</name>
    </ligand>
</feature>
<feature type="binding site" evidence="1">
    <location>
        <begin position="155"/>
        <end position="156"/>
    </location>
    <ligand>
        <name>substrate</name>
    </ligand>
</feature>
<feature type="binding site" evidence="1">
    <location>
        <position position="187"/>
    </location>
    <ligand>
        <name>substrate</name>
    </ligand>
</feature>
<feature type="binding site" evidence="1">
    <location>
        <position position="193"/>
    </location>
    <ligand>
        <name>substrate</name>
    </ligand>
</feature>
<feature type="binding site" evidence="1">
    <location>
        <begin position="259"/>
        <end position="262"/>
    </location>
    <ligand>
        <name>substrate</name>
    </ligand>
</feature>
<feature type="binding site" evidence="1">
    <location>
        <position position="333"/>
    </location>
    <ligand>
        <name>substrate</name>
    </ligand>
</feature>
<feature type="binding site" evidence="1">
    <location>
        <position position="400"/>
    </location>
    <ligand>
        <name>Mn(2+)</name>
        <dbReference type="ChEBI" id="CHEBI:29035"/>
        <label>1</label>
    </ligand>
</feature>
<feature type="binding site" evidence="1">
    <location>
        <position position="404"/>
    </location>
    <ligand>
        <name>Mn(2+)</name>
        <dbReference type="ChEBI" id="CHEBI:29035"/>
        <label>1</label>
    </ligand>
</feature>
<feature type="binding site" evidence="1">
    <location>
        <position position="441"/>
    </location>
    <ligand>
        <name>Mn(2+)</name>
        <dbReference type="ChEBI" id="CHEBI:29035"/>
        <label>2</label>
    </ligand>
</feature>
<feature type="binding site" evidence="1">
    <location>
        <position position="442"/>
    </location>
    <ligand>
        <name>Mn(2+)</name>
        <dbReference type="ChEBI" id="CHEBI:29035"/>
        <label>2</label>
    </ligand>
</feature>
<feature type="binding site" evidence="1">
    <location>
        <position position="460"/>
    </location>
    <ligand>
        <name>Mn(2+)</name>
        <dbReference type="ChEBI" id="CHEBI:29035"/>
        <label>1</label>
    </ligand>
</feature>
<gene>
    <name evidence="1" type="primary">gpmI</name>
    <name type="synonym">gpmA</name>
    <name type="ordered locus">PFL_0371</name>
</gene>
<sequence>MTTTPKPLVLMILDGFGHSESHESNAVYAAKKPVLDRLCASMPNGLISGSGMDVGLPDGQMGNSEVGHMNLGAGRVVYQDFTRVTKAIRDGEFFENPTICAAVDKAVDAGKAVHILGLLSDGGVHSHQDHLIAMAELAFKRGAEKIYLHAFLDGRDTPPKSAQSSIELLDETFKTLGKGRIASLIGRYFAMDRDNRWDRVAQAYNLIVDGQGQFNAATAQEGLQAAYAREESDEFVKATTIGEPVKVEDGDAVVFMNFRADRARELTRVFVEDDFKDFERPRQPKLAGFVMLTQYAASIPAPSAFAPGSLENVLGDYLAKNGKTQLRIAETEKYAHVTFFFSGGREEPFPGEERILIPSPKVATYDLQPEMSAPEVTDKIVDAIEHQRYDVIIVNYANGDMVGHSGVFEAAVKAVECLDLCVGRIVDALEKVGGEALITADHGNVEQMSDESTGQAHTAHTTEPVPFIYVGKRALKVREGGVLADVAPTMLKLLGLPKPAEMTGTSILVDPAH</sequence>
<proteinExistence type="inferred from homology"/>
<protein>
    <recommendedName>
        <fullName evidence="1">2,3-bisphosphoglycerate-independent phosphoglycerate mutase</fullName>
        <shortName evidence="1">BPG-independent PGAM</shortName>
        <shortName evidence="1">Phosphoglyceromutase</shortName>
        <shortName evidence="1">iPGM</shortName>
        <ecNumber evidence="1">5.4.2.12</ecNumber>
    </recommendedName>
</protein>
<keyword id="KW-0324">Glycolysis</keyword>
<keyword id="KW-0413">Isomerase</keyword>
<keyword id="KW-0464">Manganese</keyword>
<keyword id="KW-0479">Metal-binding</keyword>
<organism>
    <name type="scientific">Pseudomonas fluorescens (strain ATCC BAA-477 / NRRL B-23932 / Pf-5)</name>
    <dbReference type="NCBI Taxonomy" id="220664"/>
    <lineage>
        <taxon>Bacteria</taxon>
        <taxon>Pseudomonadati</taxon>
        <taxon>Pseudomonadota</taxon>
        <taxon>Gammaproteobacteria</taxon>
        <taxon>Pseudomonadales</taxon>
        <taxon>Pseudomonadaceae</taxon>
        <taxon>Pseudomonas</taxon>
    </lineage>
</organism>